<gene>
    <name evidence="1" type="primary">lptD</name>
    <name type="synonym">imp</name>
    <name type="synonym">ostA</name>
    <name type="ordered locus">NGO_1715</name>
</gene>
<organism>
    <name type="scientific">Neisseria gonorrhoeae (strain ATCC 700825 / FA 1090)</name>
    <dbReference type="NCBI Taxonomy" id="242231"/>
    <lineage>
        <taxon>Bacteria</taxon>
        <taxon>Pseudomonadati</taxon>
        <taxon>Pseudomonadota</taxon>
        <taxon>Betaproteobacteria</taxon>
        <taxon>Neisseriales</taxon>
        <taxon>Neisseriaceae</taxon>
        <taxon>Neisseria</taxon>
    </lineage>
</organism>
<proteinExistence type="evidence at protein level"/>
<name>LPTD_NEIG1</name>
<evidence type="ECO:0000255" key="1">
    <source>
        <dbReference type="HAMAP-Rule" id="MF_01411"/>
    </source>
</evidence>
<evidence type="ECO:0007829" key="2">
    <source>
        <dbReference type="PDB" id="7OMM"/>
    </source>
</evidence>
<accession>Q5F651</accession>
<keyword id="KW-0002">3D-structure</keyword>
<keyword id="KW-0998">Cell outer membrane</keyword>
<keyword id="KW-0472">Membrane</keyword>
<keyword id="KW-1185">Reference proteome</keyword>
<keyword id="KW-0732">Signal</keyword>
<dbReference type="EMBL" id="AE004969">
    <property type="protein sequence ID" value="AAW90336.1"/>
    <property type="molecule type" value="Genomic_DNA"/>
</dbReference>
<dbReference type="RefSeq" id="WP_003698952.1">
    <property type="nucleotide sequence ID" value="NC_002946.2"/>
</dbReference>
<dbReference type="RefSeq" id="YP_208748.1">
    <property type="nucleotide sequence ID" value="NC_002946.2"/>
</dbReference>
<dbReference type="PDB" id="7OMM">
    <property type="method" value="EM"/>
    <property type="resolution" value="3.40 A"/>
    <property type="chains" value="A=1-801"/>
</dbReference>
<dbReference type="PDBsum" id="7OMM"/>
<dbReference type="EMDB" id="EMD-12990"/>
<dbReference type="SMR" id="Q5F651"/>
<dbReference type="STRING" id="242231.NGO_1715"/>
<dbReference type="KEGG" id="ngo:NGO_1715"/>
<dbReference type="PATRIC" id="fig|242231.10.peg.2051"/>
<dbReference type="HOGENOM" id="CLU_009039_0_0_4"/>
<dbReference type="Proteomes" id="UP000000535">
    <property type="component" value="Chromosome"/>
</dbReference>
<dbReference type="GO" id="GO:0009279">
    <property type="term" value="C:cell outer membrane"/>
    <property type="evidence" value="ECO:0007669"/>
    <property type="project" value="UniProtKB-SubCell"/>
</dbReference>
<dbReference type="GO" id="GO:1990351">
    <property type="term" value="C:transporter complex"/>
    <property type="evidence" value="ECO:0007669"/>
    <property type="project" value="TreeGrafter"/>
</dbReference>
<dbReference type="GO" id="GO:0043165">
    <property type="term" value="P:Gram-negative-bacterium-type cell outer membrane assembly"/>
    <property type="evidence" value="ECO:0007669"/>
    <property type="project" value="UniProtKB-UniRule"/>
</dbReference>
<dbReference type="GO" id="GO:0015920">
    <property type="term" value="P:lipopolysaccharide transport"/>
    <property type="evidence" value="ECO:0007669"/>
    <property type="project" value="InterPro"/>
</dbReference>
<dbReference type="Gene3D" id="2.60.450.10">
    <property type="entry name" value="Lipopolysaccharide (LPS) transport protein A like domain"/>
    <property type="match status" value="1"/>
</dbReference>
<dbReference type="HAMAP" id="MF_01411">
    <property type="entry name" value="LPS_assembly_LptD"/>
    <property type="match status" value="1"/>
</dbReference>
<dbReference type="InterPro" id="IPR020889">
    <property type="entry name" value="LipoPS_assembly_LptD"/>
</dbReference>
<dbReference type="InterPro" id="IPR050218">
    <property type="entry name" value="LptD"/>
</dbReference>
<dbReference type="InterPro" id="IPR007543">
    <property type="entry name" value="LptD_C"/>
</dbReference>
<dbReference type="PANTHER" id="PTHR30189">
    <property type="entry name" value="LPS-ASSEMBLY PROTEIN"/>
    <property type="match status" value="1"/>
</dbReference>
<dbReference type="PANTHER" id="PTHR30189:SF1">
    <property type="entry name" value="LPS-ASSEMBLY PROTEIN LPTD"/>
    <property type="match status" value="1"/>
</dbReference>
<dbReference type="Pfam" id="PF04453">
    <property type="entry name" value="LptD"/>
    <property type="match status" value="1"/>
</dbReference>
<reference key="1">
    <citation type="submission" date="2003-03" db="EMBL/GenBank/DDBJ databases">
        <title>The complete genome sequence of Neisseria gonorrhoeae.</title>
        <authorList>
            <person name="Lewis L.A."/>
            <person name="Gillaspy A.F."/>
            <person name="McLaughlin R.E."/>
            <person name="Gipson M."/>
            <person name="Ducey T.F."/>
            <person name="Ownbey T."/>
            <person name="Hartman K."/>
            <person name="Nydick C."/>
            <person name="Carson M.B."/>
            <person name="Vaughn J."/>
            <person name="Thomson C."/>
            <person name="Song L."/>
            <person name="Lin S."/>
            <person name="Yuan X."/>
            <person name="Najar F."/>
            <person name="Zhan M."/>
            <person name="Ren Q."/>
            <person name="Zhu H."/>
            <person name="Qi S."/>
            <person name="Kenton S.M."/>
            <person name="Lai H."/>
            <person name="White J.D."/>
            <person name="Clifton S."/>
            <person name="Roe B.A."/>
            <person name="Dyer D.W."/>
        </authorList>
    </citation>
    <scope>NUCLEOTIDE SEQUENCE [LARGE SCALE GENOMIC DNA]</scope>
    <source>
        <strain>ATCC 700825 / FA 1090</strain>
    </source>
</reference>
<comment type="function">
    <text evidence="1">Together with LptE, is involved in the assembly of lipopolysaccharide (LPS) at the surface of the outer membrane.</text>
</comment>
<comment type="subunit">
    <text evidence="1">Component of the lipopolysaccharide transport and assembly complex. Interacts with LptE and LptA.</text>
</comment>
<comment type="subcellular location">
    <subcellularLocation>
        <location evidence="1">Cell outer membrane</location>
    </subcellularLocation>
</comment>
<comment type="similarity">
    <text evidence="1">Belongs to the LptD family.</text>
</comment>
<protein>
    <recommendedName>
        <fullName evidence="1">LPS-assembly protein LptD</fullName>
    </recommendedName>
</protein>
<sequence length="801" mass="87541">MARLFSLKPLVLALGFCFGTHCAADTVAAEEADGRVAEGGAQGASESAQASDLTLGSTCLFCSNESGSPERTEAAVQGSGEASVPEDYTRIVADRMEGQSKVKVRAEGSVIIERDGAVLNTDWADYDQSGDTVTVGDRFALQQDGTLIRGETLTYNLDQQTGEAHNVRMETEQGGRRLQSVSRTAEMLGEGRYKLTETQFNTCSAGDAGWYVKAASVEADRGKGIGVAKHAAFVFGGVPLFYTPWADFPLDGNRKSGLLVPSVSAGSDGVSLSVPYYFNLAPNFDATFAPGIIGERGATFDGQIRYLRPDYSGQTDLTWLPHDKKSGRNNRYQAKWQHRHDISDTLQAGVDFNQVSDSGYYRDFYGGEEIAGNVNLNRRVWLDYGGRAAGGSLNAGLSVQKYQTLANQSGYKDEPYAIMPRLSADWHKNAGRAQIGVSAQFTRFSHDGRQDGSRLVVYPGIKWDFSNSWGYVRPKLGLHATYYSLDSFGGKASRSVGRVLPVVNIDGGTTFERNTRLFGGGVVQTIEPRLFYNYIPAKSQNDLPNFDSSESSFGYGQLFRENLYYGNDRINAANSLSTAVQSRILDGATGEERFRAGIGQKFYFKDDAVMLDGSVGKNPRSRSDWVAFASGGIGGRFTLDSSIHYNQNDKRAEHYAVGAGYRPAPGKVLNARYKYGRNEKIYLQADGSYFYDKLSQLDLSAQWPLTRNLSAVVRYNYGFEAKKPIEMLAGAEYKSSCGCWGAGVYAQRYVTGENTYKNAVFFSLQLKDLSSVGRNPAGRMDVAVPGYIPAHSLSAGRNKRP</sequence>
<feature type="signal peptide" evidence="1">
    <location>
        <begin position="1"/>
        <end position="23"/>
    </location>
</feature>
<feature type="chain" id="PRO_0000281618" description="LPS-assembly protein LptD">
    <location>
        <begin position="24"/>
        <end position="801"/>
    </location>
</feature>
<feature type="strand" evidence="2">
    <location>
        <begin position="99"/>
        <end position="102"/>
    </location>
</feature>
<feature type="strand" evidence="2">
    <location>
        <begin position="105"/>
        <end position="109"/>
    </location>
</feature>
<feature type="turn" evidence="2">
    <location>
        <begin position="114"/>
        <end position="116"/>
    </location>
</feature>
<feature type="strand" evidence="2">
    <location>
        <begin position="118"/>
        <end position="120"/>
    </location>
</feature>
<feature type="strand" evidence="2">
    <location>
        <begin position="140"/>
        <end position="145"/>
    </location>
</feature>
<feature type="strand" evidence="2">
    <location>
        <begin position="179"/>
        <end position="181"/>
    </location>
</feature>
<feature type="strand" evidence="2">
    <location>
        <begin position="189"/>
        <end position="192"/>
    </location>
</feature>
<feature type="strand" evidence="2">
    <location>
        <begin position="195"/>
        <end position="203"/>
    </location>
</feature>
<feature type="strand" evidence="2">
    <location>
        <begin position="205"/>
        <end position="207"/>
    </location>
</feature>
<feature type="strand" evidence="2">
    <location>
        <begin position="209"/>
        <end position="215"/>
    </location>
</feature>
<feature type="strand" evidence="2">
    <location>
        <begin position="220"/>
        <end position="223"/>
    </location>
</feature>
<feature type="strand" evidence="2">
    <location>
        <begin position="232"/>
        <end position="235"/>
    </location>
</feature>
<feature type="strand" evidence="2">
    <location>
        <begin position="251"/>
        <end position="253"/>
    </location>
</feature>
<feature type="strand" evidence="2">
    <location>
        <begin position="267"/>
        <end position="269"/>
    </location>
</feature>
<feature type="strand" evidence="2">
    <location>
        <begin position="281"/>
        <end position="283"/>
    </location>
</feature>
<feature type="strand" evidence="2">
    <location>
        <begin position="294"/>
        <end position="296"/>
    </location>
</feature>
<feature type="strand" evidence="2">
    <location>
        <begin position="305"/>
        <end position="307"/>
    </location>
</feature>
<feature type="strand" evidence="2">
    <location>
        <begin position="312"/>
        <end position="314"/>
    </location>
</feature>
<feature type="strand" evidence="2">
    <location>
        <begin position="317"/>
        <end position="320"/>
    </location>
</feature>
<feature type="strand" evidence="2">
    <location>
        <begin position="324"/>
        <end position="326"/>
    </location>
</feature>
<feature type="strand" evidence="2">
    <location>
        <begin position="331"/>
        <end position="336"/>
    </location>
</feature>
<feature type="strand" evidence="2">
    <location>
        <begin position="339"/>
        <end position="345"/>
    </location>
</feature>
<feature type="strand" evidence="2">
    <location>
        <begin position="352"/>
        <end position="357"/>
    </location>
</feature>
<feature type="turn" evidence="2">
    <location>
        <begin position="361"/>
        <end position="363"/>
    </location>
</feature>
<feature type="strand" evidence="2">
    <location>
        <begin position="374"/>
        <end position="376"/>
    </location>
</feature>
<feature type="strand" evidence="2">
    <location>
        <begin position="408"/>
        <end position="410"/>
    </location>
</feature>
<feature type="strand" evidence="2">
    <location>
        <begin position="418"/>
        <end position="422"/>
    </location>
</feature>
<feature type="strand" evidence="2">
    <location>
        <begin position="434"/>
        <end position="436"/>
    </location>
</feature>
<feature type="strand" evidence="2">
    <location>
        <begin position="440"/>
        <end position="444"/>
    </location>
</feature>
<feature type="strand" evidence="2">
    <location>
        <begin position="447"/>
        <end position="449"/>
    </location>
</feature>
<feature type="strand" evidence="2">
    <location>
        <begin position="452"/>
        <end position="457"/>
    </location>
</feature>
<feature type="strand" evidence="2">
    <location>
        <begin position="471"/>
        <end position="476"/>
    </location>
</feature>
<feature type="strand" evidence="2">
    <location>
        <begin position="479"/>
        <end position="481"/>
    </location>
</feature>
<feature type="strand" evidence="2">
    <location>
        <begin position="489"/>
        <end position="491"/>
    </location>
</feature>
<feature type="strand" evidence="2">
    <location>
        <begin position="503"/>
        <end position="508"/>
    </location>
</feature>
<feature type="strand" evidence="2">
    <location>
        <begin position="511"/>
        <end position="514"/>
    </location>
</feature>
<feature type="strand" evidence="2">
    <location>
        <begin position="519"/>
        <end position="521"/>
    </location>
</feature>
<feature type="strand" evidence="2">
    <location>
        <begin position="523"/>
        <end position="530"/>
    </location>
</feature>
<feature type="strand" evidence="2">
    <location>
        <begin position="541"/>
        <end position="543"/>
    </location>
</feature>
<feature type="helix" evidence="2">
    <location>
        <begin position="556"/>
        <end position="559"/>
    </location>
</feature>
<feature type="strand" evidence="2">
    <location>
        <begin position="566"/>
        <end position="568"/>
    </location>
</feature>
<feature type="strand" evidence="2">
    <location>
        <begin position="578"/>
        <end position="585"/>
    </location>
</feature>
<feature type="strand" evidence="2">
    <location>
        <begin position="587"/>
        <end position="589"/>
    </location>
</feature>
<feature type="strand" evidence="2">
    <location>
        <begin position="592"/>
        <end position="595"/>
    </location>
</feature>
<feature type="strand" evidence="2">
    <location>
        <begin position="598"/>
        <end position="600"/>
    </location>
</feature>
<feature type="strand" evidence="2">
    <location>
        <begin position="625"/>
        <end position="645"/>
    </location>
</feature>
<feature type="turn" evidence="2">
    <location>
        <begin position="647"/>
        <end position="649"/>
    </location>
</feature>
<feature type="strand" evidence="2">
    <location>
        <begin position="651"/>
        <end position="653"/>
    </location>
</feature>
<feature type="strand" evidence="2">
    <location>
        <begin position="656"/>
        <end position="658"/>
    </location>
</feature>
<feature type="strand" evidence="2">
    <location>
        <begin position="663"/>
        <end position="666"/>
    </location>
</feature>
<feature type="strand" evidence="2">
    <location>
        <begin position="671"/>
        <end position="680"/>
    </location>
</feature>
<feature type="strand" evidence="2">
    <location>
        <begin position="685"/>
        <end position="687"/>
    </location>
</feature>
<feature type="strand" evidence="2">
    <location>
        <begin position="691"/>
        <end position="702"/>
    </location>
</feature>
<feature type="strand" evidence="2">
    <location>
        <begin position="705"/>
        <end position="718"/>
    </location>
</feature>
<feature type="turn" evidence="2">
    <location>
        <begin position="719"/>
        <end position="722"/>
    </location>
</feature>
<feature type="strand" evidence="2">
    <location>
        <begin position="725"/>
        <end position="733"/>
    </location>
</feature>
<feature type="strand" evidence="2">
    <location>
        <begin position="742"/>
        <end position="750"/>
    </location>
</feature>
<feature type="strand" evidence="2">
    <location>
        <begin position="752"/>
        <end position="754"/>
    </location>
</feature>
<feature type="strand" evidence="2">
    <location>
        <begin position="756"/>
        <end position="764"/>
    </location>
</feature>
<feature type="strand" evidence="2">
    <location>
        <begin position="792"/>
        <end position="795"/>
    </location>
</feature>